<keyword id="KW-0963">Cytoplasm</keyword>
<keyword id="KW-0255">Endonuclease</keyword>
<keyword id="KW-0378">Hydrolase</keyword>
<keyword id="KW-0464">Manganese</keyword>
<keyword id="KW-0479">Metal-binding</keyword>
<keyword id="KW-0540">Nuclease</keyword>
<keyword id="KW-1185">Reference proteome</keyword>
<comment type="function">
    <text evidence="1">Endonuclease that specifically degrades the RNA of RNA-DNA hybrids.</text>
</comment>
<comment type="catalytic activity">
    <reaction evidence="1">
        <text>Endonucleolytic cleavage to 5'-phosphomonoester.</text>
        <dbReference type="EC" id="3.1.26.4"/>
    </reaction>
</comment>
<comment type="cofactor">
    <cofactor evidence="1">
        <name>Mn(2+)</name>
        <dbReference type="ChEBI" id="CHEBI:29035"/>
    </cofactor>
    <cofactor evidence="1">
        <name>Mg(2+)</name>
        <dbReference type="ChEBI" id="CHEBI:18420"/>
    </cofactor>
    <text evidence="1">Manganese or magnesium. Binds 1 divalent metal ion per monomer in the absence of substrate. May bind a second metal ion after substrate binding.</text>
</comment>
<comment type="subcellular location">
    <subcellularLocation>
        <location evidence="1">Cytoplasm</location>
    </subcellularLocation>
</comment>
<comment type="similarity">
    <text evidence="1">Belongs to the RNase HII family.</text>
</comment>
<comment type="sequence caution" evidence="3">
    <conflict type="erroneous initiation">
        <sequence resource="EMBL-CDS" id="ABK37833"/>
    </conflict>
</comment>
<dbReference type="EC" id="3.1.26.4" evidence="1"/>
<dbReference type="EMBL" id="CP000462">
    <property type="protein sequence ID" value="ABK37833.1"/>
    <property type="status" value="ALT_INIT"/>
    <property type="molecule type" value="Genomic_DNA"/>
</dbReference>
<dbReference type="RefSeq" id="WP_164927570.1">
    <property type="nucleotide sequence ID" value="NC_008570.1"/>
</dbReference>
<dbReference type="RefSeq" id="YP_855728.1">
    <property type="nucleotide sequence ID" value="NC_008570.1"/>
</dbReference>
<dbReference type="SMR" id="A0KHH7"/>
<dbReference type="STRING" id="380703.AHA_1187"/>
<dbReference type="EnsemblBacteria" id="ABK37833">
    <property type="protein sequence ID" value="ABK37833"/>
    <property type="gene ID" value="AHA_1187"/>
</dbReference>
<dbReference type="GeneID" id="4487262"/>
<dbReference type="KEGG" id="aha:AHA_1187"/>
<dbReference type="PATRIC" id="fig|380703.7.peg.1194"/>
<dbReference type="eggNOG" id="COG0164">
    <property type="taxonomic scope" value="Bacteria"/>
</dbReference>
<dbReference type="HOGENOM" id="CLU_036532_3_2_6"/>
<dbReference type="OrthoDB" id="9803420at2"/>
<dbReference type="Proteomes" id="UP000000756">
    <property type="component" value="Chromosome"/>
</dbReference>
<dbReference type="GO" id="GO:0005737">
    <property type="term" value="C:cytoplasm"/>
    <property type="evidence" value="ECO:0007669"/>
    <property type="project" value="UniProtKB-SubCell"/>
</dbReference>
<dbReference type="GO" id="GO:0032299">
    <property type="term" value="C:ribonuclease H2 complex"/>
    <property type="evidence" value="ECO:0007669"/>
    <property type="project" value="TreeGrafter"/>
</dbReference>
<dbReference type="GO" id="GO:0030145">
    <property type="term" value="F:manganese ion binding"/>
    <property type="evidence" value="ECO:0007669"/>
    <property type="project" value="UniProtKB-UniRule"/>
</dbReference>
<dbReference type="GO" id="GO:0003723">
    <property type="term" value="F:RNA binding"/>
    <property type="evidence" value="ECO:0007669"/>
    <property type="project" value="InterPro"/>
</dbReference>
<dbReference type="GO" id="GO:0004523">
    <property type="term" value="F:RNA-DNA hybrid ribonuclease activity"/>
    <property type="evidence" value="ECO:0007669"/>
    <property type="project" value="UniProtKB-UniRule"/>
</dbReference>
<dbReference type="GO" id="GO:0043137">
    <property type="term" value="P:DNA replication, removal of RNA primer"/>
    <property type="evidence" value="ECO:0007669"/>
    <property type="project" value="TreeGrafter"/>
</dbReference>
<dbReference type="GO" id="GO:0006298">
    <property type="term" value="P:mismatch repair"/>
    <property type="evidence" value="ECO:0007669"/>
    <property type="project" value="TreeGrafter"/>
</dbReference>
<dbReference type="CDD" id="cd07182">
    <property type="entry name" value="RNase_HII_bacteria_HII_like"/>
    <property type="match status" value="1"/>
</dbReference>
<dbReference type="FunFam" id="3.30.420.10:FF:000006">
    <property type="entry name" value="Ribonuclease HII"/>
    <property type="match status" value="1"/>
</dbReference>
<dbReference type="Gene3D" id="3.30.420.10">
    <property type="entry name" value="Ribonuclease H-like superfamily/Ribonuclease H"/>
    <property type="match status" value="1"/>
</dbReference>
<dbReference type="HAMAP" id="MF_00052_B">
    <property type="entry name" value="RNase_HII_B"/>
    <property type="match status" value="1"/>
</dbReference>
<dbReference type="InterPro" id="IPR022898">
    <property type="entry name" value="RNase_HII"/>
</dbReference>
<dbReference type="InterPro" id="IPR001352">
    <property type="entry name" value="RNase_HII/HIII"/>
</dbReference>
<dbReference type="InterPro" id="IPR024567">
    <property type="entry name" value="RNase_HII/HIII_dom"/>
</dbReference>
<dbReference type="InterPro" id="IPR012337">
    <property type="entry name" value="RNaseH-like_sf"/>
</dbReference>
<dbReference type="InterPro" id="IPR036397">
    <property type="entry name" value="RNaseH_sf"/>
</dbReference>
<dbReference type="NCBIfam" id="NF000595">
    <property type="entry name" value="PRK00015.1-3"/>
    <property type="match status" value="1"/>
</dbReference>
<dbReference type="NCBIfam" id="NF000596">
    <property type="entry name" value="PRK00015.1-4"/>
    <property type="match status" value="1"/>
</dbReference>
<dbReference type="PANTHER" id="PTHR10954">
    <property type="entry name" value="RIBONUCLEASE H2 SUBUNIT A"/>
    <property type="match status" value="1"/>
</dbReference>
<dbReference type="PANTHER" id="PTHR10954:SF18">
    <property type="entry name" value="RIBONUCLEASE HII"/>
    <property type="match status" value="1"/>
</dbReference>
<dbReference type="Pfam" id="PF01351">
    <property type="entry name" value="RNase_HII"/>
    <property type="match status" value="1"/>
</dbReference>
<dbReference type="SUPFAM" id="SSF53098">
    <property type="entry name" value="Ribonuclease H-like"/>
    <property type="match status" value="1"/>
</dbReference>
<dbReference type="PROSITE" id="PS51975">
    <property type="entry name" value="RNASE_H_2"/>
    <property type="match status" value="1"/>
</dbReference>
<evidence type="ECO:0000255" key="1">
    <source>
        <dbReference type="HAMAP-Rule" id="MF_00052"/>
    </source>
</evidence>
<evidence type="ECO:0000255" key="2">
    <source>
        <dbReference type="PROSITE-ProRule" id="PRU01319"/>
    </source>
</evidence>
<evidence type="ECO:0000305" key="3"/>
<protein>
    <recommendedName>
        <fullName evidence="1">Ribonuclease HII</fullName>
        <shortName evidence="1">RNase HII</shortName>
        <ecNumber evidence="1">3.1.26.4</ecNumber>
    </recommendedName>
</protein>
<proteinExistence type="inferred from homology"/>
<feature type="chain" id="PRO_0000334855" description="Ribonuclease HII">
    <location>
        <begin position="1"/>
        <end position="196"/>
    </location>
</feature>
<feature type="domain" description="RNase H type-2" evidence="2">
    <location>
        <begin position="9"/>
        <end position="196"/>
    </location>
</feature>
<feature type="binding site" evidence="1">
    <location>
        <position position="15"/>
    </location>
    <ligand>
        <name>a divalent metal cation</name>
        <dbReference type="ChEBI" id="CHEBI:60240"/>
    </ligand>
</feature>
<feature type="binding site" evidence="1">
    <location>
        <position position="16"/>
    </location>
    <ligand>
        <name>a divalent metal cation</name>
        <dbReference type="ChEBI" id="CHEBI:60240"/>
    </ligand>
</feature>
<feature type="binding site" evidence="1">
    <location>
        <position position="107"/>
    </location>
    <ligand>
        <name>a divalent metal cation</name>
        <dbReference type="ChEBI" id="CHEBI:60240"/>
    </ligand>
</feature>
<organism>
    <name type="scientific">Aeromonas hydrophila subsp. hydrophila (strain ATCC 7966 / DSM 30187 / BCRC 13018 / CCUG 14551 / JCM 1027 / KCTC 2358 / NCIMB 9240 / NCTC 8049)</name>
    <dbReference type="NCBI Taxonomy" id="380703"/>
    <lineage>
        <taxon>Bacteria</taxon>
        <taxon>Pseudomonadati</taxon>
        <taxon>Pseudomonadota</taxon>
        <taxon>Gammaproteobacteria</taxon>
        <taxon>Aeromonadales</taxon>
        <taxon>Aeromonadaceae</taxon>
        <taxon>Aeromonas</taxon>
    </lineage>
</organism>
<gene>
    <name evidence="1" type="primary">rnhB</name>
    <name type="ordered locus">AHA_1187</name>
</gene>
<sequence>MMIDIPDDRLVAGVDEVGRGPLVGDVVTAAVILDPANPIIGLNDSKKLSEKKRLALFDEIKEKALAWSVGRASPAEIDELNILHATMLAMQRAVAGLSIAPELVFIDGNRCPSLSMEARAVVKGDSLVAAISAASILAKVTRDAEMTELDSRHPEYGFARHKGYPTAEHLAILAERGPLPEYRKSFKPVRRALGIE</sequence>
<reference key="1">
    <citation type="journal article" date="2006" name="J. Bacteriol.">
        <title>Genome sequence of Aeromonas hydrophila ATCC 7966T: jack of all trades.</title>
        <authorList>
            <person name="Seshadri R."/>
            <person name="Joseph S.W."/>
            <person name="Chopra A.K."/>
            <person name="Sha J."/>
            <person name="Shaw J."/>
            <person name="Graf J."/>
            <person name="Haft D.H."/>
            <person name="Wu M."/>
            <person name="Ren Q."/>
            <person name="Rosovitz M.J."/>
            <person name="Madupu R."/>
            <person name="Tallon L."/>
            <person name="Kim M."/>
            <person name="Jin S."/>
            <person name="Vuong H."/>
            <person name="Stine O.C."/>
            <person name="Ali A."/>
            <person name="Horneman A.J."/>
            <person name="Heidelberg J.F."/>
        </authorList>
    </citation>
    <scope>NUCLEOTIDE SEQUENCE [LARGE SCALE GENOMIC DNA]</scope>
    <source>
        <strain>ATCC 7966 / DSM 30187 / BCRC 13018 / CCUG 14551 / JCM 1027 / KCTC 2358 / NCIMB 9240 / NCTC 8049</strain>
    </source>
</reference>
<accession>A0KHH7</accession>
<name>RNH2_AERHH</name>